<comment type="function">
    <text evidence="1 5 8 10 11 13">Plays an important role in several reproductive functions. Induces Muellerian duct regression during male fetal sexual differentiation (PubMed:34155118, PubMed:3754790, PubMed:8469238). Also plays a role in Leydig cell differentiation and function (By similarity). In female acts as a negative regulator of the primordial to primary follicle transition and decreases FSH sensitivity of growing follicles (PubMed:14742691). AMH signals by binding to a specific type-II receptor, AMHR2, that heterodimerizes with type-I receptors (ACVR1 and BMPR1A), and recruiting SMAD proteins that are translocated to the nucleus to regulate target gene expression (PubMed:20861221, PubMed:34155118).</text>
</comment>
<comment type="subunit">
    <text evidence="9 13">Homodimer; disulfide-linked.</text>
</comment>
<comment type="subcellular location">
    <subcellularLocation>
        <location evidence="9 11">Secreted</location>
    </subcellularLocation>
</comment>
<comment type="tissue specificity">
    <text evidence="5">In ovaries, AMH is detected in granulosa cells of early growing follicles.</text>
</comment>
<comment type="developmental stage">
    <text evidence="5">Detected in primary follicles and continued to be expressed in follicles in the antral stage. The highest level of AMH expression is present in granulosa cells of secondary, preantral and small antral follicles &lt;4 mm in diameter, whereas expression is lost from follicles at sizes &gt;8 mm.</text>
</comment>
<comment type="induction">
    <text evidence="4">Plasma AMH levels in polycystic ovary syndrome (PCOS) patients are two- to threefold higher than in women with normal ovaries.</text>
</comment>
<comment type="PTM">
    <text evidence="8 9 13">Preproprotein is proteolytically processed to generate N- and C-terminal cleavage products that homodimerize and associate to form a biologically active non-covalent complex (PubMed:2974034, PubMed:8469238). Binding of the non-covalent complex to AMHR2 induces dissociation of the pro-region from the mature C-terminal dimer (PubMed:20861221). The N-terminal portion of the protein, despite having no intrinsic activity, has the role of amplifying the activity of the C-terminus (PubMed:20861221, PubMed:8469238).</text>
</comment>
<comment type="disease" evidence="12 14">
    <disease id="DI-02155">
        <name>Persistent Muellerian duct syndrome 1</name>
        <acronym>PMDS1</acronym>
        <description>A form of male pseudohermaphroditism characterized by a failure of Muellerian duct regression in otherwise normal males.</description>
        <dbReference type="MIM" id="261550"/>
    </disease>
    <text>The disease is caused by variants affecting the gene represented in this entry.</text>
</comment>
<comment type="similarity">
    <text evidence="16">Belongs to the TGF-beta family.</text>
</comment>
<comment type="online information" name="Wikipedia">
    <link uri="https://en.wikipedia.org/wiki/Anti-m%C3%BCllerian_hormone"/>
    <text>Anti-Mullerian hormone entry</text>
</comment>
<sequence>MRDLPLTSLALVLSALGALLGTEALRAEEPAVGTSGLIFREDLDWPPGSPQEPLCLVALGGDSNGSSSPLRVVGALSAYEQAFLGAVQRARWGPRDLATFGVCNTGDRQAALPSLRRLGAWLRDPGGQRLVVLHLEEVTWEPTPSLRFQEPPPGGAGPPELALLVLYPGPGPEVTVTRAGLPGAQSLCPSRDTRYLVLAVDRPAGAWRGSGLALTLQPRGEDSRLSTARLQALLFGDDHRCFTRMTPALLLLPRSEPAPLPAHGQLDTVPFPPPRPSAELEESPPSADPFLETLTRLVRALRVPPARASAPRLALDPDALAGFPQGLVNLSDPAALERLLDGEEPLLLLLRPTAATTGDPAPLHDPTSAPWATALARRVAAELQAAAAELRSLPGLPPATAPLLARLLALCPGGPGGLGDPLRALLLLKALQGLRVEWRGRDPRGPGRAQRSAGATAADGPCALRELSVDLRAERSVLIPETYQANNCQGVCGWPQSDRNPRYGNHVVLLLKMQVRGAALARPPCCVPTAYAGKLLISLSEERISAHHVPNMVATECGCR</sequence>
<proteinExistence type="evidence at protein level"/>
<organism>
    <name type="scientific">Homo sapiens</name>
    <name type="common">Human</name>
    <dbReference type="NCBI Taxonomy" id="9606"/>
    <lineage>
        <taxon>Eukaryota</taxon>
        <taxon>Metazoa</taxon>
        <taxon>Chordata</taxon>
        <taxon>Craniata</taxon>
        <taxon>Vertebrata</taxon>
        <taxon>Euteleostomi</taxon>
        <taxon>Mammalia</taxon>
        <taxon>Eutheria</taxon>
        <taxon>Euarchontoglires</taxon>
        <taxon>Primates</taxon>
        <taxon>Haplorrhini</taxon>
        <taxon>Catarrhini</taxon>
        <taxon>Hominidae</taxon>
        <taxon>Homo</taxon>
    </lineage>
</organism>
<dbReference type="EMBL" id="K03474">
    <property type="protein sequence ID" value="AAA98805.1"/>
    <property type="molecule type" value="Genomic_DNA"/>
</dbReference>
<dbReference type="EMBL" id="AC005263">
    <property type="protein sequence ID" value="AAC25614.1"/>
    <property type="molecule type" value="Genomic_DNA"/>
</dbReference>
<dbReference type="EMBL" id="BC049194">
    <property type="protein sequence ID" value="AAH49194.1"/>
    <property type="molecule type" value="mRNA"/>
</dbReference>
<dbReference type="CCDS" id="CCDS12085.1"/>
<dbReference type="PIR" id="A01397">
    <property type="entry name" value="WFHUM"/>
</dbReference>
<dbReference type="RefSeq" id="NP_000470.3">
    <property type="nucleotide sequence ID" value="NM_000479.5"/>
</dbReference>
<dbReference type="PDB" id="7L0J">
    <property type="method" value="X-ray"/>
    <property type="resolution" value="2.60 A"/>
    <property type="chains" value="A=459-560"/>
</dbReference>
<dbReference type="PDBsum" id="7L0J"/>
<dbReference type="EMDB" id="EMD-44407"/>
<dbReference type="EMDB" id="EMD-44408"/>
<dbReference type="SMR" id="P03971"/>
<dbReference type="BioGRID" id="106765">
    <property type="interactions" value="8"/>
</dbReference>
<dbReference type="FunCoup" id="P03971">
    <property type="interactions" value="943"/>
</dbReference>
<dbReference type="IntAct" id="P03971">
    <property type="interactions" value="6"/>
</dbReference>
<dbReference type="STRING" id="9606.ENSP00000221496"/>
<dbReference type="GlyCosmos" id="P03971">
    <property type="glycosylation" value="4 sites, 1 glycan"/>
</dbReference>
<dbReference type="GlyGen" id="P03971">
    <property type="glycosylation" value="6 sites, 2 O-linked glycans (3 sites)"/>
</dbReference>
<dbReference type="iPTMnet" id="P03971"/>
<dbReference type="PhosphoSitePlus" id="P03971"/>
<dbReference type="BioMuta" id="AMH"/>
<dbReference type="DMDM" id="313104218"/>
<dbReference type="jPOST" id="P03971"/>
<dbReference type="MassIVE" id="P03971"/>
<dbReference type="PaxDb" id="9606-ENSP00000221496"/>
<dbReference type="PeptideAtlas" id="P03971"/>
<dbReference type="ProteomicsDB" id="51624"/>
<dbReference type="Antibodypedia" id="22968">
    <property type="antibodies" value="616 antibodies from 35 providers"/>
</dbReference>
<dbReference type="DNASU" id="268"/>
<dbReference type="Ensembl" id="ENST00000221496.5">
    <property type="protein sequence ID" value="ENSP00000221496.2"/>
    <property type="gene ID" value="ENSG00000104899.8"/>
</dbReference>
<dbReference type="GeneID" id="268"/>
<dbReference type="KEGG" id="hsa:268"/>
<dbReference type="MANE-Select" id="ENST00000221496.5">
    <property type="protein sequence ID" value="ENSP00000221496.2"/>
    <property type="RefSeq nucleotide sequence ID" value="NM_000479.5"/>
    <property type="RefSeq protein sequence ID" value="NP_000470.3"/>
</dbReference>
<dbReference type="UCSC" id="uc002lvh.3">
    <property type="organism name" value="human"/>
</dbReference>
<dbReference type="AGR" id="HGNC:464"/>
<dbReference type="CTD" id="268"/>
<dbReference type="DisGeNET" id="268"/>
<dbReference type="GeneCards" id="AMH"/>
<dbReference type="HGNC" id="HGNC:464">
    <property type="gene designation" value="AMH"/>
</dbReference>
<dbReference type="HPA" id="ENSG00000104899">
    <property type="expression patterns" value="Group enriched (brain, pituitary gland, testis)"/>
</dbReference>
<dbReference type="MalaCards" id="AMH"/>
<dbReference type="MIM" id="261550">
    <property type="type" value="phenotype"/>
</dbReference>
<dbReference type="MIM" id="600957">
    <property type="type" value="gene"/>
</dbReference>
<dbReference type="neXtProt" id="NX_P03971"/>
<dbReference type="OpenTargets" id="ENSG00000104899"/>
<dbReference type="Orphanet" id="2856">
    <property type="disease" value="Persistent Muellerian duct syndrome"/>
</dbReference>
<dbReference type="PharmGKB" id="PA24769"/>
<dbReference type="VEuPathDB" id="HostDB:ENSG00000104899"/>
<dbReference type="eggNOG" id="KOG3900">
    <property type="taxonomic scope" value="Eukaryota"/>
</dbReference>
<dbReference type="GeneTree" id="ENSGT00390000006337"/>
<dbReference type="HOGENOM" id="CLU_025681_1_0_1"/>
<dbReference type="InParanoid" id="P03971"/>
<dbReference type="OMA" id="HRCFTRM"/>
<dbReference type="OrthoDB" id="9893739at2759"/>
<dbReference type="PAN-GO" id="P03971">
    <property type="GO annotations" value="2 GO annotations based on evolutionary models"/>
</dbReference>
<dbReference type="PhylomeDB" id="P03971"/>
<dbReference type="TreeFam" id="TF335595"/>
<dbReference type="PathwayCommons" id="P03971"/>
<dbReference type="Reactome" id="R-HSA-201451">
    <property type="pathway name" value="Signaling by BMP"/>
</dbReference>
<dbReference type="Reactome" id="R-HSA-9690406">
    <property type="pathway name" value="Transcriptional regulation of testis differentiation"/>
</dbReference>
<dbReference type="SignaLink" id="P03971"/>
<dbReference type="SIGNOR" id="P03971"/>
<dbReference type="BioGRID-ORCS" id="268">
    <property type="hits" value="13 hits in 1150 CRISPR screens"/>
</dbReference>
<dbReference type="GenomeRNAi" id="268"/>
<dbReference type="Pharos" id="P03971">
    <property type="development level" value="Tbio"/>
</dbReference>
<dbReference type="PRO" id="PR:P03971"/>
<dbReference type="Proteomes" id="UP000005640">
    <property type="component" value="Chromosome 19"/>
</dbReference>
<dbReference type="RNAct" id="P03971">
    <property type="molecule type" value="protein"/>
</dbReference>
<dbReference type="Bgee" id="ENSG00000104899">
    <property type="expression patterns" value="Expressed in male germ line stem cell (sensu Vertebrata) in testis and 94 other cell types or tissues"/>
</dbReference>
<dbReference type="GO" id="GO:0005576">
    <property type="term" value="C:extracellular region"/>
    <property type="evidence" value="ECO:0000304"/>
    <property type="project" value="Reactome"/>
</dbReference>
<dbReference type="GO" id="GO:0005615">
    <property type="term" value="C:extracellular space"/>
    <property type="evidence" value="ECO:0000314"/>
    <property type="project" value="UniProtKB"/>
</dbReference>
<dbReference type="GO" id="GO:0008083">
    <property type="term" value="F:growth factor activity"/>
    <property type="evidence" value="ECO:0007669"/>
    <property type="project" value="UniProtKB-KW"/>
</dbReference>
<dbReference type="GO" id="GO:0005179">
    <property type="term" value="F:hormone activity"/>
    <property type="evidence" value="ECO:0000304"/>
    <property type="project" value="ProtInc"/>
</dbReference>
<dbReference type="GO" id="GO:0005102">
    <property type="term" value="F:signaling receptor binding"/>
    <property type="evidence" value="ECO:0000353"/>
    <property type="project" value="UniProtKB"/>
</dbReference>
<dbReference type="GO" id="GO:0005114">
    <property type="term" value="F:type II transforming growth factor beta receptor binding"/>
    <property type="evidence" value="ECO:0000314"/>
    <property type="project" value="UniProtKB"/>
</dbReference>
<dbReference type="GO" id="GO:1990262">
    <property type="term" value="P:anti-Mullerian hormone receptor signaling pathway"/>
    <property type="evidence" value="ECO:0000314"/>
    <property type="project" value="UniProtKB"/>
</dbReference>
<dbReference type="GO" id="GO:0007267">
    <property type="term" value="P:cell-cell signaling"/>
    <property type="evidence" value="ECO:0000304"/>
    <property type="project" value="ProtInc"/>
</dbReference>
<dbReference type="GO" id="GO:0007506">
    <property type="term" value="P:gonadal mesoderm development"/>
    <property type="evidence" value="ECO:0007669"/>
    <property type="project" value="UniProtKB-KW"/>
</dbReference>
<dbReference type="GO" id="GO:0033327">
    <property type="term" value="P:Leydig cell differentiation"/>
    <property type="evidence" value="ECO:0000250"/>
    <property type="project" value="UniProtKB"/>
</dbReference>
<dbReference type="GO" id="GO:0001880">
    <property type="term" value="P:Mullerian duct regression"/>
    <property type="evidence" value="ECO:0000314"/>
    <property type="project" value="UniProtKB"/>
</dbReference>
<dbReference type="GO" id="GO:2000355">
    <property type="term" value="P:negative regulation of ovarian follicle development"/>
    <property type="evidence" value="ECO:0000250"/>
    <property type="project" value="UniProtKB"/>
</dbReference>
<dbReference type="GO" id="GO:0001541">
    <property type="term" value="P:ovarian follicle development"/>
    <property type="evidence" value="ECO:0000250"/>
    <property type="project" value="UniProtKB"/>
</dbReference>
<dbReference type="GO" id="GO:0010628">
    <property type="term" value="P:positive regulation of gene expression"/>
    <property type="evidence" value="ECO:0000315"/>
    <property type="project" value="UniProtKB"/>
</dbReference>
<dbReference type="GO" id="GO:0060391">
    <property type="term" value="P:positive regulation of SMAD protein signal transduction"/>
    <property type="evidence" value="ECO:0000314"/>
    <property type="project" value="UniProtKB"/>
</dbReference>
<dbReference type="GO" id="GO:0001546">
    <property type="term" value="P:preantral ovarian follicle growth"/>
    <property type="evidence" value="ECO:0007669"/>
    <property type="project" value="Ensembl"/>
</dbReference>
<dbReference type="GO" id="GO:0009410">
    <property type="term" value="P:response to xenobiotic stimulus"/>
    <property type="evidence" value="ECO:0007669"/>
    <property type="project" value="Ensembl"/>
</dbReference>
<dbReference type="GO" id="GO:0007530">
    <property type="term" value="P:sex determination"/>
    <property type="evidence" value="ECO:0000304"/>
    <property type="project" value="ProtInc"/>
</dbReference>
<dbReference type="GO" id="GO:0007548">
    <property type="term" value="P:sex differentiation"/>
    <property type="evidence" value="ECO:0000304"/>
    <property type="project" value="UniProtKB"/>
</dbReference>
<dbReference type="GO" id="GO:0001655">
    <property type="term" value="P:urogenital system development"/>
    <property type="evidence" value="ECO:0007669"/>
    <property type="project" value="Ensembl"/>
</dbReference>
<dbReference type="CDD" id="cd13757">
    <property type="entry name" value="TGF_beta_AMH"/>
    <property type="match status" value="1"/>
</dbReference>
<dbReference type="FunFam" id="2.10.90.10:FF:000033">
    <property type="entry name" value="Muellerian-inhibiting factor"/>
    <property type="match status" value="1"/>
</dbReference>
<dbReference type="Gene3D" id="2.10.90.10">
    <property type="entry name" value="Cystine-knot cytokines"/>
    <property type="match status" value="1"/>
</dbReference>
<dbReference type="InterPro" id="IPR006799">
    <property type="entry name" value="AMH_N"/>
</dbReference>
<dbReference type="InterPro" id="IPR029034">
    <property type="entry name" value="Cystine-knot_cytokine"/>
</dbReference>
<dbReference type="InterPro" id="IPR021203">
    <property type="entry name" value="Muellerian-inhibiting_factor"/>
</dbReference>
<dbReference type="InterPro" id="IPR001839">
    <property type="entry name" value="TGF-b_C"/>
</dbReference>
<dbReference type="InterPro" id="IPR017948">
    <property type="entry name" value="TGFb_CS"/>
</dbReference>
<dbReference type="PANTHER" id="PTHR15009">
    <property type="entry name" value="MUELLERIAN-INHIBITING FACTOR"/>
    <property type="match status" value="1"/>
</dbReference>
<dbReference type="PANTHER" id="PTHR15009:SF4">
    <property type="entry name" value="MUELLERIAN-INHIBITING FACTOR"/>
    <property type="match status" value="1"/>
</dbReference>
<dbReference type="Pfam" id="PF04709">
    <property type="entry name" value="AMH_N"/>
    <property type="match status" value="1"/>
</dbReference>
<dbReference type="Pfam" id="PF00019">
    <property type="entry name" value="TGF_beta"/>
    <property type="match status" value="1"/>
</dbReference>
<dbReference type="PIRSF" id="PIRSF037270">
    <property type="entry name" value="Muellerian-inhibiting_factor"/>
    <property type="match status" value="1"/>
</dbReference>
<dbReference type="SMART" id="SM00204">
    <property type="entry name" value="TGFB"/>
    <property type="match status" value="1"/>
</dbReference>
<dbReference type="SUPFAM" id="SSF57501">
    <property type="entry name" value="Cystine-knot cytokines"/>
    <property type="match status" value="1"/>
</dbReference>
<dbReference type="PROSITE" id="PS00250">
    <property type="entry name" value="TGF_BETA_1"/>
    <property type="match status" value="1"/>
</dbReference>
<dbReference type="PROSITE" id="PS51362">
    <property type="entry name" value="TGF_BETA_2"/>
    <property type="match status" value="1"/>
</dbReference>
<protein>
    <recommendedName>
        <fullName>Muellerian-inhibiting factor</fullName>
    </recommendedName>
    <alternativeName>
        <fullName>Anti-Muellerian hormone</fullName>
        <shortName>AMH</shortName>
    </alternativeName>
    <alternativeName>
        <fullName evidence="15">Muellerian-inhibiting substance</fullName>
        <shortName evidence="15">MIS</shortName>
    </alternativeName>
</protein>
<name>MIS_HUMAN</name>
<accession>P03971</accession>
<accession>O75246</accession>
<accession>Q6GTN3</accession>
<evidence type="ECO:0000250" key="1">
    <source>
        <dbReference type="UniProtKB" id="P27106"/>
    </source>
</evidence>
<evidence type="ECO:0000255" key="2"/>
<evidence type="ECO:0000256" key="3">
    <source>
        <dbReference type="SAM" id="MobiDB-lite"/>
    </source>
</evidence>
<evidence type="ECO:0000269" key="4">
    <source>
    </source>
</evidence>
<evidence type="ECO:0000269" key="5">
    <source>
    </source>
</evidence>
<evidence type="ECO:0000269" key="6">
    <source>
    </source>
</evidence>
<evidence type="ECO:0000269" key="7">
    <source>
    </source>
</evidence>
<evidence type="ECO:0000269" key="8">
    <source>
    </source>
</evidence>
<evidence type="ECO:0000269" key="9">
    <source>
    </source>
</evidence>
<evidence type="ECO:0000269" key="10">
    <source>
    </source>
</evidence>
<evidence type="ECO:0000269" key="11">
    <source>
    </source>
</evidence>
<evidence type="ECO:0000269" key="12">
    <source>
    </source>
</evidence>
<evidence type="ECO:0000269" key="13">
    <source>
    </source>
</evidence>
<evidence type="ECO:0000269" key="14">
    <source>
    </source>
</evidence>
<evidence type="ECO:0000303" key="15">
    <source>
    </source>
</evidence>
<evidence type="ECO:0000305" key="16"/>
<evidence type="ECO:0000312" key="17">
    <source>
        <dbReference type="HGNC" id="HGNC:464"/>
    </source>
</evidence>
<evidence type="ECO:0007744" key="18">
    <source>
        <dbReference type="PDB" id="7L0J"/>
    </source>
</evidence>
<evidence type="ECO:0007829" key="19">
    <source>
        <dbReference type="PDB" id="7L0J"/>
    </source>
</evidence>
<keyword id="KW-0002">3D-structure</keyword>
<keyword id="KW-0221">Differentiation</keyword>
<keyword id="KW-0903">Direct protein sequencing</keyword>
<keyword id="KW-0225">Disease variant</keyword>
<keyword id="KW-1015">Disulfide bond</keyword>
<keyword id="KW-0325">Glycoprotein</keyword>
<keyword id="KW-0334">Gonadal differentiation</keyword>
<keyword id="KW-0339">Growth factor</keyword>
<keyword id="KW-1267">Proteomics identification</keyword>
<keyword id="KW-0657">Pseudohermaphroditism</keyword>
<keyword id="KW-1185">Reference proteome</keyword>
<keyword id="KW-0964">Secreted</keyword>
<keyword id="KW-0732">Signal</keyword>
<feature type="signal peptide" evidence="9">
    <location>
        <begin position="1"/>
        <end position="24"/>
    </location>
</feature>
<feature type="propeptide" id="PRO_0000454649" evidence="9">
    <location>
        <begin position="25"/>
        <end position="451"/>
    </location>
</feature>
<feature type="chain" id="PRO_0000033747" description="Muellerian-inhibiting factor">
    <location>
        <begin position="452"/>
        <end position="560"/>
    </location>
</feature>
<feature type="region of interest" description="Disordered" evidence="3">
    <location>
        <begin position="259"/>
        <end position="287"/>
    </location>
</feature>
<feature type="site" description="Cleavage" evidence="9">
    <location>
        <begin position="451"/>
        <end position="452"/>
    </location>
</feature>
<feature type="glycosylation site" description="N-linked (GlcNAc...) asparagine" evidence="2">
    <location>
        <position position="64"/>
    </location>
</feature>
<feature type="glycosylation site" description="N-linked (GlcNAc...) asparagine" evidence="2">
    <location>
        <position position="329"/>
    </location>
</feature>
<feature type="disulfide bond" evidence="10 18">
    <location>
        <begin position="462"/>
        <end position="526"/>
    </location>
</feature>
<feature type="disulfide bond" evidence="10 18">
    <location>
        <begin position="488"/>
        <end position="557"/>
    </location>
</feature>
<feature type="disulfide bond" evidence="10 18">
    <location>
        <begin position="492"/>
        <end position="559"/>
    </location>
</feature>
<feature type="disulfide bond" description="Interchain" evidence="10">
    <location>
        <position position="525"/>
    </location>
</feature>
<feature type="sequence variant" id="VAR_007483" description="In PMDS1; dbSNP:rs149082963." evidence="12">
    <original>V</original>
    <variation>G</variation>
    <location>
        <position position="12"/>
    </location>
</feature>
<feature type="sequence variant" id="VAR_007484" description="In dbSNP:rs10407022." evidence="11">
    <original>S</original>
    <variation>I</variation>
    <location>
        <position position="49"/>
    </location>
</feature>
<feature type="sequence variant" id="VAR_007485" description="In PMDS1." evidence="12">
    <original>L</original>
    <variation>P</variation>
    <location>
        <position position="70"/>
    </location>
</feature>
<feature type="sequence variant" id="VAR_007486" description="In PMDS1." evidence="12">
    <original>G</original>
    <variation>V</variation>
    <location>
        <position position="101"/>
    </location>
</feature>
<feature type="sequence variant" id="VAR_007487" description="In PMDS1; dbSNP:rs569914235." evidence="12">
    <original>R</original>
    <variation>W</variation>
    <location>
        <position position="123"/>
    </location>
</feature>
<feature type="sequence variant" id="VAR_007488" description="In PMDS1; dbSNP:rs371874189." evidence="12">
    <original>Y</original>
    <variation>C</variation>
    <location>
        <position position="167"/>
    </location>
</feature>
<feature type="sequence variant" id="VAR_007489" description="In dbSNP:rs200523942.">
    <original>Q</original>
    <variation>E</variation>
    <location>
        <position position="185"/>
    </location>
</feature>
<feature type="sequence variant" id="VAR_007490" description="In PMDS1; dbSNP:rs777003373." evidence="12">
    <original>R</original>
    <variation>C</variation>
    <location>
        <position position="194"/>
    </location>
</feature>
<feature type="sequence variant" id="VAR_007491" description="In dbSNP:rs140765565." evidence="6">
    <original>Q</original>
    <variation>R</variation>
    <location>
        <position position="325"/>
    </location>
</feature>
<feature type="sequence variant" id="VAR_007492" description="In PMDS1; dbSNP:rs1358787117." evidence="12">
    <original>V</original>
    <variation>A</variation>
    <location>
        <position position="477"/>
    </location>
</feature>
<feature type="sequence variant" id="VAR_031027" description="In PMDS1; dbSNP:rs138571039." evidence="14">
    <original>H</original>
    <variation>Q</variation>
    <location>
        <position position="506"/>
    </location>
</feature>
<feature type="sequence variant" id="VAR_065100" description="In dbSNP:rs10417628." evidence="7 11">
    <original>V</original>
    <variation>A</variation>
    <location>
        <position position="515"/>
    </location>
</feature>
<feature type="sequence variant" id="VAR_031028" description="In PMDS1." evidence="14">
    <original>C</original>
    <variation>Y</variation>
    <location>
        <position position="525"/>
    </location>
</feature>
<feature type="mutagenesis site" description="Little effect on AMH signaling." evidence="10">
    <original>R</original>
    <variation>D</variation>
    <location>
        <position position="472"/>
    </location>
</feature>
<feature type="mutagenesis site" description="Abolishes AMH signaling. Does not induce regression of the Muellerian duct." evidence="10">
    <original>L</original>
    <variation>A</variation>
    <location>
        <position position="478"/>
    </location>
</feature>
<feature type="mutagenesis site" description="Shows a slight decrease in AMH signaling. Affects slightly Mullerian duct regression." evidence="10">
    <original>E</original>
    <variation>A</variation>
    <location>
        <position position="481"/>
    </location>
</feature>
<feature type="mutagenesis site" description="Decreases AMH signaling." evidence="10">
    <original>E</original>
    <variation>R</variation>
    <variation>Y</variation>
    <location>
        <position position="481"/>
    </location>
</feature>
<feature type="mutagenesis site" description="Little effect on AMH signaling." evidence="10">
    <original>Q</original>
    <variation>S</variation>
    <location>
        <position position="484"/>
    </location>
</feature>
<feature type="mutagenesis site" description="Abolishes AMH signaling." evidence="10">
    <original>K</original>
    <variation>A</variation>
    <location>
        <position position="534"/>
    </location>
</feature>
<feature type="mutagenesis site" description="Little effect on AMH signaling." evidence="10">
    <original>L</original>
    <variation>Y</variation>
    <location>
        <position position="535"/>
    </location>
</feature>
<feature type="mutagenesis site" description="Abolishes AMH signaling." evidence="10">
    <original>A</original>
    <variation>M</variation>
    <location>
        <position position="546"/>
    </location>
</feature>
<feature type="strand" evidence="19">
    <location>
        <begin position="461"/>
        <end position="465"/>
    </location>
</feature>
<feature type="strand" evidence="19">
    <location>
        <begin position="468"/>
        <end position="470"/>
    </location>
</feature>
<feature type="strand" evidence="19">
    <location>
        <begin position="472"/>
        <end position="479"/>
    </location>
</feature>
<feature type="strand" evidence="19">
    <location>
        <begin position="481"/>
        <end position="484"/>
    </location>
</feature>
<feature type="strand" evidence="19">
    <location>
        <begin position="487"/>
        <end position="491"/>
    </location>
</feature>
<feature type="strand" evidence="19">
    <location>
        <begin position="498"/>
        <end position="500"/>
    </location>
</feature>
<feature type="helix" evidence="19">
    <location>
        <begin position="505"/>
        <end position="515"/>
    </location>
</feature>
<feature type="strand" evidence="19">
    <location>
        <begin position="525"/>
        <end position="540"/>
    </location>
</feature>
<feature type="strand" evidence="19">
    <location>
        <begin position="543"/>
        <end position="560"/>
    </location>
</feature>
<reference key="1">
    <citation type="journal article" date="1986" name="Cell">
        <title>Isolation of the bovine and human genes for Mullerian inhibiting substance and expression of the human gene in animal cells.</title>
        <authorList>
            <person name="Cate R.L."/>
            <person name="Mattaliano R.J."/>
            <person name="Hession C."/>
            <person name="Tizard R."/>
            <person name="Farber N.M."/>
            <person name="Cheung A."/>
            <person name="Ninfa E.G."/>
            <person name="Frey A.Z."/>
            <person name="Gash D.J."/>
            <person name="Chow E.P."/>
            <person name="Fisher R.A."/>
            <person name="Bertonis J.M."/>
            <person name="Torres G."/>
            <person name="Wallner B.P."/>
            <person name="Ramachandran K.L."/>
            <person name="Ragin R.C."/>
            <person name="Manganaro T.F."/>
            <person name="McLaughlin D.T."/>
            <person name="Donahoe P.K."/>
        </authorList>
    </citation>
    <scope>NUCLEOTIDE SEQUENCE [GENOMIC DNA]</scope>
    <scope>VARIANTS ILE-49 AND ALA-515</scope>
    <scope>FUNCTION</scope>
    <scope>SUBCELLULAR LOCATION</scope>
</reference>
<reference key="2">
    <citation type="journal article" date="2004" name="Nature">
        <title>The DNA sequence and biology of human chromosome 19.</title>
        <authorList>
            <person name="Grimwood J."/>
            <person name="Gordon L.A."/>
            <person name="Olsen A.S."/>
            <person name="Terry A."/>
            <person name="Schmutz J."/>
            <person name="Lamerdin J.E."/>
            <person name="Hellsten U."/>
            <person name="Goodstein D."/>
            <person name="Couronne O."/>
            <person name="Tran-Gyamfi M."/>
            <person name="Aerts A."/>
            <person name="Altherr M."/>
            <person name="Ashworth L."/>
            <person name="Bajorek E."/>
            <person name="Black S."/>
            <person name="Branscomb E."/>
            <person name="Caenepeel S."/>
            <person name="Carrano A.V."/>
            <person name="Caoile C."/>
            <person name="Chan Y.M."/>
            <person name="Christensen M."/>
            <person name="Cleland C.A."/>
            <person name="Copeland A."/>
            <person name="Dalin E."/>
            <person name="Dehal P."/>
            <person name="Denys M."/>
            <person name="Detter J.C."/>
            <person name="Escobar J."/>
            <person name="Flowers D."/>
            <person name="Fotopulos D."/>
            <person name="Garcia C."/>
            <person name="Georgescu A.M."/>
            <person name="Glavina T."/>
            <person name="Gomez M."/>
            <person name="Gonzales E."/>
            <person name="Groza M."/>
            <person name="Hammon N."/>
            <person name="Hawkins T."/>
            <person name="Haydu L."/>
            <person name="Ho I."/>
            <person name="Huang W."/>
            <person name="Israni S."/>
            <person name="Jett J."/>
            <person name="Kadner K."/>
            <person name="Kimball H."/>
            <person name="Kobayashi A."/>
            <person name="Larionov V."/>
            <person name="Leem S.-H."/>
            <person name="Lopez F."/>
            <person name="Lou Y."/>
            <person name="Lowry S."/>
            <person name="Malfatti S."/>
            <person name="Martinez D."/>
            <person name="McCready P.M."/>
            <person name="Medina C."/>
            <person name="Morgan J."/>
            <person name="Nelson K."/>
            <person name="Nolan M."/>
            <person name="Ovcharenko I."/>
            <person name="Pitluck S."/>
            <person name="Pollard M."/>
            <person name="Popkie A.P."/>
            <person name="Predki P."/>
            <person name="Quan G."/>
            <person name="Ramirez L."/>
            <person name="Rash S."/>
            <person name="Retterer J."/>
            <person name="Rodriguez A."/>
            <person name="Rogers S."/>
            <person name="Salamov A."/>
            <person name="Salazar A."/>
            <person name="She X."/>
            <person name="Smith D."/>
            <person name="Slezak T."/>
            <person name="Solovyev V."/>
            <person name="Thayer N."/>
            <person name="Tice H."/>
            <person name="Tsai M."/>
            <person name="Ustaszewska A."/>
            <person name="Vo N."/>
            <person name="Wagner M."/>
            <person name="Wheeler J."/>
            <person name="Wu K."/>
            <person name="Xie G."/>
            <person name="Yang J."/>
            <person name="Dubchak I."/>
            <person name="Furey T.S."/>
            <person name="DeJong P."/>
            <person name="Dickson M."/>
            <person name="Gordon D."/>
            <person name="Eichler E.E."/>
            <person name="Pennacchio L.A."/>
            <person name="Richardson P."/>
            <person name="Stubbs L."/>
            <person name="Rokhsar D.S."/>
            <person name="Myers R.M."/>
            <person name="Rubin E.M."/>
            <person name="Lucas S.M."/>
        </authorList>
    </citation>
    <scope>NUCLEOTIDE SEQUENCE [LARGE SCALE GENOMIC DNA]</scope>
</reference>
<reference key="3">
    <citation type="journal article" date="2004" name="Genome Res.">
        <title>The status, quality, and expansion of the NIH full-length cDNA project: the Mammalian Gene Collection (MGC).</title>
        <authorList>
            <consortium name="The MGC Project Team"/>
        </authorList>
    </citation>
    <scope>NUCLEOTIDE SEQUENCE [LARGE SCALE MRNA]</scope>
    <scope>VARIANT ALA-515</scope>
    <source>
        <tissue>Brain</tissue>
    </source>
</reference>
<reference key="4">
    <citation type="journal article" date="1988" name="J. Biol. Chem.">
        <title>Proteolytic processing of mullerian inhibiting substance produces a transforming growth factor-beta-like fragment.</title>
        <authorList>
            <person name="Pepinsky R.B."/>
            <person name="Sinclair L.K."/>
            <person name="Chow E.P."/>
            <person name="Mattaliano R.J."/>
            <person name="Manganaro T.F."/>
            <person name="Donahoe P.K."/>
            <person name="Cate R.L."/>
        </authorList>
    </citation>
    <scope>PROTEOLYTIC CLEAVAGE</scope>
    <scope>SUBCELLULAR LOCATION</scope>
    <scope>SUBUNIT</scope>
    <scope>PROTEIN SEQUENCE OF 25-34 AND 452-461</scope>
</reference>
<reference key="5">
    <citation type="journal article" date="1993" name="Mol. Endocrinol.">
        <title>Mullerian inhibiting substance requires its N-terminal domain for maintenance of biological activity, a novel finding within the transforming growth factor-beta superfamily.</title>
        <authorList>
            <person name="Wilson C.A."/>
            <person name="di Clemente N."/>
            <person name="Ehrenfels C."/>
            <person name="Pepinsky R.B."/>
            <person name="Josso N."/>
            <person name="Vigier B."/>
            <person name="Cate R.L."/>
        </authorList>
    </citation>
    <scope>FUNCTION</scope>
    <scope>SUBUNIT</scope>
    <scope>PROTEOLYTIC PROCESSING</scope>
</reference>
<reference key="6">
    <citation type="journal article" date="2002" name="Fertil. Steril.">
        <title>Relationship between serum muellerian-inhibiting substance and other reproductive hormones in untreated women with polycystic ovary syndrome and normal women.</title>
        <authorList>
            <person name="Cook C.L."/>
            <person name="Siow Y."/>
            <person name="Brenner A.G."/>
            <person name="Fallat M.E."/>
        </authorList>
    </citation>
    <scope>INDUCTION</scope>
</reference>
<reference key="7">
    <citation type="journal article" date="2004" name="Mol. Hum. Reprod.">
        <title>Anti-Muellerian hormone expression pattern in the human ovary: potential implications for initial and cyclic follicle recruitment.</title>
        <authorList>
            <person name="Weenen C."/>
            <person name="Laven J.S."/>
            <person name="Von Bergh A.R."/>
            <person name="Cranfield M."/>
            <person name="Groome N.P."/>
            <person name="Visser J.A."/>
            <person name="Kramer P."/>
            <person name="Fauser B.C."/>
            <person name="Themmen A.P."/>
        </authorList>
    </citation>
    <scope>TISSUE SPECIFICITY</scope>
    <scope>DEVELOPMENTAL STAGE</scope>
</reference>
<reference key="8">
    <citation type="journal article" date="2010" name="Mol. Endocrinol.">
        <title>Processing of anti-mullerian hormone regulates receptor activation by a mechanism distinct from TGF-beta.</title>
        <authorList>
            <person name="di Clemente N."/>
            <person name="Jamin S.P."/>
            <person name="Lugovskoy A."/>
            <person name="Carmillo P."/>
            <person name="Ehrenfels C."/>
            <person name="Picard J.Y."/>
            <person name="Whitty A."/>
            <person name="Josso N."/>
            <person name="Pepinsky R.B."/>
            <person name="Cate R.L."/>
        </authorList>
    </citation>
    <scope>FUNCTION</scope>
    <scope>INTERACTION WITH AMHR2</scope>
    <scope>PROTEOLYTIC PROCESSING</scope>
</reference>
<reference key="9">
    <citation type="journal article" date="1992" name="Hum. Genet.">
        <title>Variants of the anti-Mullerian hormone gene in a compound heterozygote with the persistent Mullerian duct syndrome and his family.</title>
        <authorList>
            <person name="Carre-Eusebe D."/>
            <person name="Imbeaud S."/>
            <person name="Harbison M."/>
            <person name="New M.I."/>
            <person name="Josso N."/>
            <person name="Picard J.-Y."/>
        </authorList>
    </citation>
    <scope>VARIANT ARG-325</scope>
</reference>
<reference key="10">
    <citation type="journal article" date="1994" name="Hum. Mol. Genet.">
        <title>Molecular genetics of the persistent Mullerian duct syndrome: a study of 19 families.</title>
        <authorList>
            <person name="Imbeaud S."/>
            <person name="Carre-Eusebe D."/>
            <person name="Rey R."/>
            <person name="Belville C."/>
            <person name="Josso N."/>
            <person name="Picard J.-Y."/>
        </authorList>
    </citation>
    <scope>VARIANTS PMDS1 GLY-12; PRO-70; VAL-101; TRP-123; CYS-167; CYS-194 AND ALA-477</scope>
</reference>
<reference key="11">
    <citation type="journal article" date="1996" name="Hum. Mol. Genet.">
        <title>A 27 base-pair deletion of the anti-Muellerian type II receptor gene is the most common cause of the persistent Muellerian duct syndrome.</title>
        <authorList>
            <person name="Imbeaud S."/>
            <person name="Belville C."/>
            <person name="Messika-Zeitoun L."/>
            <person name="Rey R."/>
            <person name="di Clemente N."/>
            <person name="Josso N."/>
            <person name="Picard J.-Y."/>
        </authorList>
    </citation>
    <scope>VARIANTS PMDS1 GLN-506 AND TYR-525</scope>
</reference>
<reference key="12">
    <citation type="journal article" date="2021" name="Proc. Natl. Acad. Sci. U.S.A.">
        <title>Structure of AMH bound to AMHR2 provides insight into a unique signaling pair in the TGF-beta family.</title>
        <authorList>
            <person name="Hart K.N."/>
            <person name="Stocker W.A."/>
            <person name="Nagykery N.G."/>
            <person name="Walton K.L."/>
            <person name="Harrison C.A."/>
            <person name="Donahoe P.K."/>
            <person name="Pepin D."/>
            <person name="Thompson T.B."/>
        </authorList>
    </citation>
    <scope>X-RAY CRYSTALLOGRAPHY (2.6 ANGSTROMS) OF 459-560 IN COMPLEX WITH AMHR2</scope>
    <scope>DISULFIDE BOND</scope>
    <scope>MUTAGENESIS OF ARG-472; LEU-478; GLU-481; GLN-484; LYS-534; LEU-535 AND ALA-546</scope>
    <scope>FUNCTION</scope>
</reference>
<gene>
    <name evidence="17" type="primary">AMH</name>
    <name type="synonym">MIF</name>
</gene>